<comment type="function">
    <text evidence="1">Hydrolyzes ribosome-free peptidyl-tRNAs (with 1 or more amino acids incorporated), which drop off the ribosome during protein synthesis, or as a result of ribosome stalling.</text>
</comment>
<comment type="function">
    <text evidence="1">Catalyzes the release of premature peptidyl moieties from peptidyl-tRNA molecules trapped in stalled 50S ribosomal subunits, and thus maintains levels of free tRNAs and 50S ribosomes.</text>
</comment>
<comment type="catalytic activity">
    <reaction evidence="1">
        <text>an N-acyl-L-alpha-aminoacyl-tRNA + H2O = an N-acyl-L-amino acid + a tRNA + H(+)</text>
        <dbReference type="Rhea" id="RHEA:54448"/>
        <dbReference type="Rhea" id="RHEA-COMP:10123"/>
        <dbReference type="Rhea" id="RHEA-COMP:13883"/>
        <dbReference type="ChEBI" id="CHEBI:15377"/>
        <dbReference type="ChEBI" id="CHEBI:15378"/>
        <dbReference type="ChEBI" id="CHEBI:59874"/>
        <dbReference type="ChEBI" id="CHEBI:78442"/>
        <dbReference type="ChEBI" id="CHEBI:138191"/>
        <dbReference type="EC" id="3.1.1.29"/>
    </reaction>
</comment>
<comment type="subunit">
    <text evidence="1">Monomer.</text>
</comment>
<comment type="subcellular location">
    <subcellularLocation>
        <location evidence="1">Cytoplasm</location>
    </subcellularLocation>
</comment>
<comment type="similarity">
    <text evidence="1">Belongs to the PTH family.</text>
</comment>
<dbReference type="EC" id="3.1.1.29" evidence="1"/>
<dbReference type="EMBL" id="CP001230">
    <property type="protein sequence ID" value="ACO04866.1"/>
    <property type="molecule type" value="Genomic_DNA"/>
</dbReference>
<dbReference type="RefSeq" id="WP_015898970.1">
    <property type="nucleotide sequence ID" value="NC_012440.1"/>
</dbReference>
<dbReference type="SMR" id="C0QQW6"/>
<dbReference type="STRING" id="123214.PERMA_1290"/>
<dbReference type="PaxDb" id="123214-PERMA_1290"/>
<dbReference type="KEGG" id="pmx:PERMA_1290"/>
<dbReference type="eggNOG" id="COG0193">
    <property type="taxonomic scope" value="Bacteria"/>
</dbReference>
<dbReference type="HOGENOM" id="CLU_062456_4_1_0"/>
<dbReference type="OrthoDB" id="9800507at2"/>
<dbReference type="Proteomes" id="UP000001366">
    <property type="component" value="Chromosome"/>
</dbReference>
<dbReference type="GO" id="GO:0005737">
    <property type="term" value="C:cytoplasm"/>
    <property type="evidence" value="ECO:0007669"/>
    <property type="project" value="UniProtKB-SubCell"/>
</dbReference>
<dbReference type="GO" id="GO:0004045">
    <property type="term" value="F:peptidyl-tRNA hydrolase activity"/>
    <property type="evidence" value="ECO:0007669"/>
    <property type="project" value="UniProtKB-UniRule"/>
</dbReference>
<dbReference type="GO" id="GO:0000049">
    <property type="term" value="F:tRNA binding"/>
    <property type="evidence" value="ECO:0007669"/>
    <property type="project" value="UniProtKB-UniRule"/>
</dbReference>
<dbReference type="GO" id="GO:0006515">
    <property type="term" value="P:protein quality control for misfolded or incompletely synthesized proteins"/>
    <property type="evidence" value="ECO:0007669"/>
    <property type="project" value="UniProtKB-UniRule"/>
</dbReference>
<dbReference type="GO" id="GO:0072344">
    <property type="term" value="P:rescue of stalled ribosome"/>
    <property type="evidence" value="ECO:0007669"/>
    <property type="project" value="UniProtKB-UniRule"/>
</dbReference>
<dbReference type="CDD" id="cd00462">
    <property type="entry name" value="PTH"/>
    <property type="match status" value="1"/>
</dbReference>
<dbReference type="FunFam" id="3.40.50.1470:FF:000001">
    <property type="entry name" value="Peptidyl-tRNA hydrolase"/>
    <property type="match status" value="1"/>
</dbReference>
<dbReference type="Gene3D" id="3.40.50.1470">
    <property type="entry name" value="Peptidyl-tRNA hydrolase"/>
    <property type="match status" value="1"/>
</dbReference>
<dbReference type="HAMAP" id="MF_00083">
    <property type="entry name" value="Pept_tRNA_hydro_bact"/>
    <property type="match status" value="1"/>
</dbReference>
<dbReference type="InterPro" id="IPR001328">
    <property type="entry name" value="Pept_tRNA_hydro"/>
</dbReference>
<dbReference type="InterPro" id="IPR018171">
    <property type="entry name" value="Pept_tRNA_hydro_CS"/>
</dbReference>
<dbReference type="InterPro" id="IPR036416">
    <property type="entry name" value="Pept_tRNA_hydro_sf"/>
</dbReference>
<dbReference type="NCBIfam" id="TIGR00447">
    <property type="entry name" value="pth"/>
    <property type="match status" value="1"/>
</dbReference>
<dbReference type="PANTHER" id="PTHR17224">
    <property type="entry name" value="PEPTIDYL-TRNA HYDROLASE"/>
    <property type="match status" value="1"/>
</dbReference>
<dbReference type="PANTHER" id="PTHR17224:SF1">
    <property type="entry name" value="PEPTIDYL-TRNA HYDROLASE"/>
    <property type="match status" value="1"/>
</dbReference>
<dbReference type="Pfam" id="PF01195">
    <property type="entry name" value="Pept_tRNA_hydro"/>
    <property type="match status" value="1"/>
</dbReference>
<dbReference type="SUPFAM" id="SSF53178">
    <property type="entry name" value="Peptidyl-tRNA hydrolase-like"/>
    <property type="match status" value="1"/>
</dbReference>
<dbReference type="PROSITE" id="PS01195">
    <property type="entry name" value="PEPT_TRNA_HYDROL_1"/>
    <property type="match status" value="1"/>
</dbReference>
<sequence>MIKAVIGLGNPGKQYEDTRHNVGFMIADVVASLLKCNKKYIERCFSHIYVCEDHYLLIVKPQTFMNNSGVAVKNLLEDYDLKPDEILVVYDDLDLPLGTVRLRKKGSSGGHRGIQSIIESIKTDEFPRIKVGIGRPERKEQVVDYVLSPFKKEEKILLDKVISHTAQCILNVLKYGIDKSLNLCNKKIV</sequence>
<organism>
    <name type="scientific">Persephonella marina (strain DSM 14350 / EX-H1)</name>
    <dbReference type="NCBI Taxonomy" id="123214"/>
    <lineage>
        <taxon>Bacteria</taxon>
        <taxon>Pseudomonadati</taxon>
        <taxon>Aquificota</taxon>
        <taxon>Aquificia</taxon>
        <taxon>Aquificales</taxon>
        <taxon>Hydrogenothermaceae</taxon>
        <taxon>Persephonella</taxon>
    </lineage>
</organism>
<evidence type="ECO:0000255" key="1">
    <source>
        <dbReference type="HAMAP-Rule" id="MF_00083"/>
    </source>
</evidence>
<proteinExistence type="inferred from homology"/>
<accession>C0QQW6</accession>
<keyword id="KW-0963">Cytoplasm</keyword>
<keyword id="KW-0378">Hydrolase</keyword>
<keyword id="KW-1185">Reference proteome</keyword>
<keyword id="KW-0694">RNA-binding</keyword>
<keyword id="KW-0820">tRNA-binding</keyword>
<feature type="chain" id="PRO_1000202593" description="Peptidyl-tRNA hydrolase">
    <location>
        <begin position="1"/>
        <end position="189"/>
    </location>
</feature>
<feature type="active site" description="Proton acceptor" evidence="1">
    <location>
        <position position="20"/>
    </location>
</feature>
<feature type="binding site" evidence="1">
    <location>
        <position position="15"/>
    </location>
    <ligand>
        <name>tRNA</name>
        <dbReference type="ChEBI" id="CHEBI:17843"/>
    </ligand>
</feature>
<feature type="binding site" evidence="1">
    <location>
        <position position="64"/>
    </location>
    <ligand>
        <name>tRNA</name>
        <dbReference type="ChEBI" id="CHEBI:17843"/>
    </ligand>
</feature>
<feature type="binding site" evidence="1">
    <location>
        <position position="66"/>
    </location>
    <ligand>
        <name>tRNA</name>
        <dbReference type="ChEBI" id="CHEBI:17843"/>
    </ligand>
</feature>
<feature type="site" description="Discriminates between blocked and unblocked aminoacyl-tRNA" evidence="1">
    <location>
        <position position="10"/>
    </location>
</feature>
<feature type="site" description="Stabilizes the basic form of H active site to accept a proton" evidence="1">
    <location>
        <position position="91"/>
    </location>
</feature>
<gene>
    <name evidence="1" type="primary">pth</name>
    <name type="ordered locus">PERMA_1290</name>
</gene>
<reference key="1">
    <citation type="journal article" date="2009" name="J. Bacteriol.">
        <title>Complete and draft genome sequences of six members of the Aquificales.</title>
        <authorList>
            <person name="Reysenbach A.-L."/>
            <person name="Hamamura N."/>
            <person name="Podar M."/>
            <person name="Griffiths E."/>
            <person name="Ferreira S."/>
            <person name="Hochstein R."/>
            <person name="Heidelberg J."/>
            <person name="Johnson J."/>
            <person name="Mead D."/>
            <person name="Pohorille A."/>
            <person name="Sarmiento M."/>
            <person name="Schweighofer K."/>
            <person name="Seshadri R."/>
            <person name="Voytek M.A."/>
        </authorList>
    </citation>
    <scope>NUCLEOTIDE SEQUENCE [LARGE SCALE GENOMIC DNA]</scope>
    <source>
        <strain>DSM 14350 / EX-H1</strain>
    </source>
</reference>
<protein>
    <recommendedName>
        <fullName evidence="1">Peptidyl-tRNA hydrolase</fullName>
        <shortName evidence="1">Pth</shortName>
        <ecNumber evidence="1">3.1.1.29</ecNumber>
    </recommendedName>
</protein>
<name>PTH_PERMH</name>